<name>SYS_STRP7</name>
<reference key="1">
    <citation type="journal article" date="2010" name="Genome Biol.">
        <title>Structure and dynamics of the pan-genome of Streptococcus pneumoniae and closely related species.</title>
        <authorList>
            <person name="Donati C."/>
            <person name="Hiller N.L."/>
            <person name="Tettelin H."/>
            <person name="Muzzi A."/>
            <person name="Croucher N.J."/>
            <person name="Angiuoli S.V."/>
            <person name="Oggioni M."/>
            <person name="Dunning Hotopp J.C."/>
            <person name="Hu F.Z."/>
            <person name="Riley D.R."/>
            <person name="Covacci A."/>
            <person name="Mitchell T.J."/>
            <person name="Bentley S.D."/>
            <person name="Kilian M."/>
            <person name="Ehrlich G.D."/>
            <person name="Rappuoli R."/>
            <person name="Moxon E.R."/>
            <person name="Masignani V."/>
        </authorList>
    </citation>
    <scope>NUCLEOTIDE SEQUENCE [LARGE SCALE GENOMIC DNA]</scope>
    <source>
        <strain>70585</strain>
    </source>
</reference>
<organism>
    <name type="scientific">Streptococcus pneumoniae (strain 70585)</name>
    <dbReference type="NCBI Taxonomy" id="488221"/>
    <lineage>
        <taxon>Bacteria</taxon>
        <taxon>Bacillati</taxon>
        <taxon>Bacillota</taxon>
        <taxon>Bacilli</taxon>
        <taxon>Lactobacillales</taxon>
        <taxon>Streptococcaceae</taxon>
        <taxon>Streptococcus</taxon>
    </lineage>
</organism>
<feature type="chain" id="PRO_1000199506" description="Serine--tRNA ligase">
    <location>
        <begin position="1"/>
        <end position="424"/>
    </location>
</feature>
<feature type="binding site" evidence="1">
    <location>
        <begin position="230"/>
        <end position="232"/>
    </location>
    <ligand>
        <name>L-serine</name>
        <dbReference type="ChEBI" id="CHEBI:33384"/>
    </ligand>
</feature>
<feature type="binding site" evidence="1">
    <location>
        <begin position="261"/>
        <end position="263"/>
    </location>
    <ligand>
        <name>ATP</name>
        <dbReference type="ChEBI" id="CHEBI:30616"/>
    </ligand>
</feature>
<feature type="binding site" evidence="1">
    <location>
        <position position="284"/>
    </location>
    <ligand>
        <name>L-serine</name>
        <dbReference type="ChEBI" id="CHEBI:33384"/>
    </ligand>
</feature>
<feature type="binding site" evidence="1">
    <location>
        <begin position="348"/>
        <end position="351"/>
    </location>
    <ligand>
        <name>ATP</name>
        <dbReference type="ChEBI" id="CHEBI:30616"/>
    </ligand>
</feature>
<feature type="binding site" evidence="1">
    <location>
        <position position="384"/>
    </location>
    <ligand>
        <name>L-serine</name>
        <dbReference type="ChEBI" id="CHEBI:33384"/>
    </ligand>
</feature>
<evidence type="ECO:0000255" key="1">
    <source>
        <dbReference type="HAMAP-Rule" id="MF_00176"/>
    </source>
</evidence>
<accession>C1C5E8</accession>
<sequence>MLDIKRIRTDFEAVAEKLATRGVDAAVLNEMKEIDAKRRNILVKVETLKAERNTVSAEIAQAKRNKENTDDKIAAMQNLSAEVKALDAELAEIDAKLTEFTTTLPNIPADSVPVGADEDDNVEVRRWGTPREFDFEPKAHWDLGEDLGILDWERGGKVTGARFLFYKGLGARLERAIYNFMLDEHGKEGYTEVITPYIVNHDSMFGTGQYPKFKEDTFELSDTNFVLIPTAEVPLANYYRDEILDGKDLPIYFTAMSPSFRSEAGSAGRDTRGLIRLHQFHKVEMVKFAKPEESYEELEKMTANAENILQKLNLPYRVVALSTGDMGFSAAKTYDLEVWIPAQNNYREISSCSNTEDFQARRAQIRYRDEADGKVKLLHTLNGSGLAVGRTVAAILENYQNEDGSVTIPEALRPYMGGAEVIKP</sequence>
<keyword id="KW-0030">Aminoacyl-tRNA synthetase</keyword>
<keyword id="KW-0067">ATP-binding</keyword>
<keyword id="KW-0963">Cytoplasm</keyword>
<keyword id="KW-0436">Ligase</keyword>
<keyword id="KW-0547">Nucleotide-binding</keyword>
<keyword id="KW-0648">Protein biosynthesis</keyword>
<gene>
    <name evidence="1" type="primary">serS</name>
    <name type="ordered locus">SP70585_0482</name>
</gene>
<comment type="function">
    <text evidence="1">Catalyzes the attachment of serine to tRNA(Ser). Is also able to aminoacylate tRNA(Sec) with serine, to form the misacylated tRNA L-seryl-tRNA(Sec), which will be further converted into selenocysteinyl-tRNA(Sec).</text>
</comment>
<comment type="catalytic activity">
    <reaction evidence="1">
        <text>tRNA(Ser) + L-serine + ATP = L-seryl-tRNA(Ser) + AMP + diphosphate + H(+)</text>
        <dbReference type="Rhea" id="RHEA:12292"/>
        <dbReference type="Rhea" id="RHEA-COMP:9669"/>
        <dbReference type="Rhea" id="RHEA-COMP:9703"/>
        <dbReference type="ChEBI" id="CHEBI:15378"/>
        <dbReference type="ChEBI" id="CHEBI:30616"/>
        <dbReference type="ChEBI" id="CHEBI:33019"/>
        <dbReference type="ChEBI" id="CHEBI:33384"/>
        <dbReference type="ChEBI" id="CHEBI:78442"/>
        <dbReference type="ChEBI" id="CHEBI:78533"/>
        <dbReference type="ChEBI" id="CHEBI:456215"/>
        <dbReference type="EC" id="6.1.1.11"/>
    </reaction>
</comment>
<comment type="catalytic activity">
    <reaction evidence="1">
        <text>tRNA(Sec) + L-serine + ATP = L-seryl-tRNA(Sec) + AMP + diphosphate + H(+)</text>
        <dbReference type="Rhea" id="RHEA:42580"/>
        <dbReference type="Rhea" id="RHEA-COMP:9742"/>
        <dbReference type="Rhea" id="RHEA-COMP:10128"/>
        <dbReference type="ChEBI" id="CHEBI:15378"/>
        <dbReference type="ChEBI" id="CHEBI:30616"/>
        <dbReference type="ChEBI" id="CHEBI:33019"/>
        <dbReference type="ChEBI" id="CHEBI:33384"/>
        <dbReference type="ChEBI" id="CHEBI:78442"/>
        <dbReference type="ChEBI" id="CHEBI:78533"/>
        <dbReference type="ChEBI" id="CHEBI:456215"/>
        <dbReference type="EC" id="6.1.1.11"/>
    </reaction>
</comment>
<comment type="pathway">
    <text evidence="1">Aminoacyl-tRNA biosynthesis; selenocysteinyl-tRNA(Sec) biosynthesis; L-seryl-tRNA(Sec) from L-serine and tRNA(Sec): step 1/1.</text>
</comment>
<comment type="subunit">
    <text evidence="1">Homodimer. The tRNA molecule binds across the dimer.</text>
</comment>
<comment type="subcellular location">
    <subcellularLocation>
        <location evidence="1">Cytoplasm</location>
    </subcellularLocation>
</comment>
<comment type="domain">
    <text evidence="1">Consists of two distinct domains, a catalytic core and a N-terminal extension that is involved in tRNA binding.</text>
</comment>
<comment type="similarity">
    <text evidence="1">Belongs to the class-II aminoacyl-tRNA synthetase family. Type-1 seryl-tRNA synthetase subfamily.</text>
</comment>
<dbReference type="EC" id="6.1.1.11" evidence="1"/>
<dbReference type="EMBL" id="CP000918">
    <property type="protein sequence ID" value="ACO16946.1"/>
    <property type="molecule type" value="Genomic_DNA"/>
</dbReference>
<dbReference type="RefSeq" id="WP_000884249.1">
    <property type="nucleotide sequence ID" value="NC_012468.1"/>
</dbReference>
<dbReference type="SMR" id="C1C5E8"/>
<dbReference type="GeneID" id="45652134"/>
<dbReference type="KEGG" id="snm:SP70585_0482"/>
<dbReference type="HOGENOM" id="CLU_023797_1_1_9"/>
<dbReference type="UniPathway" id="UPA00906">
    <property type="reaction ID" value="UER00895"/>
</dbReference>
<dbReference type="Proteomes" id="UP000002211">
    <property type="component" value="Chromosome"/>
</dbReference>
<dbReference type="GO" id="GO:0005737">
    <property type="term" value="C:cytoplasm"/>
    <property type="evidence" value="ECO:0007669"/>
    <property type="project" value="UniProtKB-SubCell"/>
</dbReference>
<dbReference type="GO" id="GO:0005524">
    <property type="term" value="F:ATP binding"/>
    <property type="evidence" value="ECO:0007669"/>
    <property type="project" value="UniProtKB-UniRule"/>
</dbReference>
<dbReference type="GO" id="GO:0140096">
    <property type="term" value="F:catalytic activity, acting on a protein"/>
    <property type="evidence" value="ECO:0007669"/>
    <property type="project" value="UniProtKB-ARBA"/>
</dbReference>
<dbReference type="GO" id="GO:0004828">
    <property type="term" value="F:serine-tRNA ligase activity"/>
    <property type="evidence" value="ECO:0007669"/>
    <property type="project" value="UniProtKB-UniRule"/>
</dbReference>
<dbReference type="GO" id="GO:0016740">
    <property type="term" value="F:transferase activity"/>
    <property type="evidence" value="ECO:0007669"/>
    <property type="project" value="UniProtKB-ARBA"/>
</dbReference>
<dbReference type="GO" id="GO:0016260">
    <property type="term" value="P:selenocysteine biosynthetic process"/>
    <property type="evidence" value="ECO:0007669"/>
    <property type="project" value="UniProtKB-UniRule"/>
</dbReference>
<dbReference type="GO" id="GO:0006434">
    <property type="term" value="P:seryl-tRNA aminoacylation"/>
    <property type="evidence" value="ECO:0007669"/>
    <property type="project" value="UniProtKB-UniRule"/>
</dbReference>
<dbReference type="CDD" id="cd00770">
    <property type="entry name" value="SerRS_core"/>
    <property type="match status" value="1"/>
</dbReference>
<dbReference type="Gene3D" id="3.30.930.10">
    <property type="entry name" value="Bira Bifunctional Protein, Domain 2"/>
    <property type="match status" value="1"/>
</dbReference>
<dbReference type="Gene3D" id="1.10.287.40">
    <property type="entry name" value="Serine-tRNA synthetase, tRNA binding domain"/>
    <property type="match status" value="1"/>
</dbReference>
<dbReference type="HAMAP" id="MF_00176">
    <property type="entry name" value="Ser_tRNA_synth_type1"/>
    <property type="match status" value="1"/>
</dbReference>
<dbReference type="InterPro" id="IPR002314">
    <property type="entry name" value="aa-tRNA-synt_IIb"/>
</dbReference>
<dbReference type="InterPro" id="IPR006195">
    <property type="entry name" value="aa-tRNA-synth_II"/>
</dbReference>
<dbReference type="InterPro" id="IPR045864">
    <property type="entry name" value="aa-tRNA-synth_II/BPL/LPL"/>
</dbReference>
<dbReference type="InterPro" id="IPR002317">
    <property type="entry name" value="Ser-tRNA-ligase_type_1"/>
</dbReference>
<dbReference type="InterPro" id="IPR015866">
    <property type="entry name" value="Ser-tRNA-synth_1_N"/>
</dbReference>
<dbReference type="InterPro" id="IPR042103">
    <property type="entry name" value="SerRS_1_N_sf"/>
</dbReference>
<dbReference type="InterPro" id="IPR033729">
    <property type="entry name" value="SerRS_core"/>
</dbReference>
<dbReference type="InterPro" id="IPR010978">
    <property type="entry name" value="tRNA-bd_arm"/>
</dbReference>
<dbReference type="NCBIfam" id="TIGR00414">
    <property type="entry name" value="serS"/>
    <property type="match status" value="1"/>
</dbReference>
<dbReference type="PANTHER" id="PTHR43697:SF1">
    <property type="entry name" value="SERINE--TRNA LIGASE"/>
    <property type="match status" value="1"/>
</dbReference>
<dbReference type="PANTHER" id="PTHR43697">
    <property type="entry name" value="SERYL-TRNA SYNTHETASE"/>
    <property type="match status" value="1"/>
</dbReference>
<dbReference type="Pfam" id="PF02403">
    <property type="entry name" value="Seryl_tRNA_N"/>
    <property type="match status" value="1"/>
</dbReference>
<dbReference type="Pfam" id="PF00587">
    <property type="entry name" value="tRNA-synt_2b"/>
    <property type="match status" value="1"/>
</dbReference>
<dbReference type="PIRSF" id="PIRSF001529">
    <property type="entry name" value="Ser-tRNA-synth_IIa"/>
    <property type="match status" value="1"/>
</dbReference>
<dbReference type="PRINTS" id="PR00981">
    <property type="entry name" value="TRNASYNTHSER"/>
</dbReference>
<dbReference type="SUPFAM" id="SSF55681">
    <property type="entry name" value="Class II aaRS and biotin synthetases"/>
    <property type="match status" value="1"/>
</dbReference>
<dbReference type="SUPFAM" id="SSF46589">
    <property type="entry name" value="tRNA-binding arm"/>
    <property type="match status" value="1"/>
</dbReference>
<dbReference type="PROSITE" id="PS50862">
    <property type="entry name" value="AA_TRNA_LIGASE_II"/>
    <property type="match status" value="1"/>
</dbReference>
<protein>
    <recommendedName>
        <fullName evidence="1">Serine--tRNA ligase</fullName>
        <ecNumber evidence="1">6.1.1.11</ecNumber>
    </recommendedName>
    <alternativeName>
        <fullName evidence="1">Seryl-tRNA synthetase</fullName>
        <shortName evidence="1">SerRS</shortName>
    </alternativeName>
    <alternativeName>
        <fullName evidence="1">Seryl-tRNA(Ser/Sec) synthetase</fullName>
    </alternativeName>
</protein>
<proteinExistence type="inferred from homology"/>